<keyword id="KW-0004">4Fe-4S</keyword>
<keyword id="KW-0067">ATP-binding</keyword>
<keyword id="KW-0149">Chlorophyll biosynthesis</keyword>
<keyword id="KW-0408">Iron</keyword>
<keyword id="KW-0411">Iron-sulfur</keyword>
<keyword id="KW-0460">Magnesium</keyword>
<keyword id="KW-0479">Metal-binding</keyword>
<keyword id="KW-0547">Nucleotide-binding</keyword>
<keyword id="KW-0560">Oxidoreductase</keyword>
<keyword id="KW-0602">Photosynthesis</keyword>
<reference key="1">
    <citation type="journal article" date="2014" name="Stand. Genomic Sci.">
        <title>Complete genome sequence of Anabaena variabilis ATCC 29413.</title>
        <authorList>
            <person name="Thiel T."/>
            <person name="Pratte B.S."/>
            <person name="Zhong J."/>
            <person name="Goodwin L."/>
            <person name="Copeland A."/>
            <person name="Lucas S."/>
            <person name="Han C."/>
            <person name="Pitluck S."/>
            <person name="Land M.L."/>
            <person name="Kyrpides N.C."/>
            <person name="Woyke T."/>
        </authorList>
    </citation>
    <scope>NUCLEOTIDE SEQUENCE [LARGE SCALE GENOMIC DNA]</scope>
    <source>
        <strain>ATCC 29413 / PCC 7937</strain>
    </source>
</reference>
<name>CHLL_TRIV2</name>
<organism>
    <name type="scientific">Trichormus variabilis (strain ATCC 29413 / PCC 7937)</name>
    <name type="common">Anabaena variabilis</name>
    <dbReference type="NCBI Taxonomy" id="240292"/>
    <lineage>
        <taxon>Bacteria</taxon>
        <taxon>Bacillati</taxon>
        <taxon>Cyanobacteriota</taxon>
        <taxon>Cyanophyceae</taxon>
        <taxon>Nostocales</taxon>
        <taxon>Nostocaceae</taxon>
        <taxon>Trichormus</taxon>
    </lineage>
</organism>
<protein>
    <recommendedName>
        <fullName evidence="1">Light-independent protochlorophyllide reductase iron-sulfur ATP-binding protein</fullName>
        <shortName evidence="1">DPOR subunit L</shortName>
        <shortName evidence="1">LI-POR subunit L</shortName>
        <ecNumber evidence="1">1.3.7.7</ecNumber>
    </recommendedName>
</protein>
<feature type="chain" id="PRO_0000324051" description="Light-independent protochlorophyllide reductase iron-sulfur ATP-binding protein">
    <location>
        <begin position="1"/>
        <end position="288"/>
    </location>
</feature>
<feature type="binding site" evidence="1">
    <location>
        <begin position="10"/>
        <end position="15"/>
    </location>
    <ligand>
        <name>ATP</name>
        <dbReference type="ChEBI" id="CHEBI:30616"/>
    </ligand>
</feature>
<feature type="binding site" evidence="1">
    <location>
        <position position="14"/>
    </location>
    <ligand>
        <name>Mg(2+)</name>
        <dbReference type="ChEBI" id="CHEBI:18420"/>
    </ligand>
</feature>
<feature type="binding site" evidence="1">
    <location>
        <position position="39"/>
    </location>
    <ligand>
        <name>ATP</name>
        <dbReference type="ChEBI" id="CHEBI:30616"/>
    </ligand>
</feature>
<feature type="binding site" evidence="1">
    <location>
        <position position="95"/>
    </location>
    <ligand>
        <name>[4Fe-4S] cluster</name>
        <dbReference type="ChEBI" id="CHEBI:49883"/>
        <note>ligand shared between dimeric partners</note>
    </ligand>
</feature>
<feature type="binding site" evidence="1">
    <location>
        <position position="129"/>
    </location>
    <ligand>
        <name>[4Fe-4S] cluster</name>
        <dbReference type="ChEBI" id="CHEBI:49883"/>
        <note>ligand shared between dimeric partners</note>
    </ligand>
</feature>
<feature type="binding site" evidence="1">
    <location>
        <begin position="180"/>
        <end position="181"/>
    </location>
    <ligand>
        <name>ATP</name>
        <dbReference type="ChEBI" id="CHEBI:30616"/>
    </ligand>
</feature>
<sequence length="288" mass="31449">MKLAVYGKGGIGKSTTSCNISVALAKRGKKVLQIGCDPKHDSTFTLTGFLIPTIIDTLQEKDYHYEDVWPEDVIYKGYGGVDCVEAGGPPAGAGCGGYVVGETVKLLKELNAFDEYDVILFDVLGDVVCGGFAAPLNYADYCMIVTDNGFDALFAANRIAASVREKARTHPLRLAGLIGNRTSKRDLIEKYVEAVPMPVLEVLPLIEDIRVSRVKGKTLFEMAESDPSLNYVCDYYLSIADQILARPEGVVPNDAPDRELFSLLSDFYLNPGKPQVPNPEEELDLMIV</sequence>
<evidence type="ECO:0000255" key="1">
    <source>
        <dbReference type="HAMAP-Rule" id="MF_00355"/>
    </source>
</evidence>
<evidence type="ECO:0000305" key="2"/>
<comment type="function">
    <text evidence="1">Component of the dark-operative protochlorophyllide reductase (DPOR) that uses Mg-ATP and reduced ferredoxin to reduce ring D of protochlorophyllide (Pchlide) to form chlorophyllide a (Chlide). This reaction is light-independent. The L component serves as a unique electron donor to the NB-component of the complex, and binds Mg-ATP.</text>
</comment>
<comment type="catalytic activity">
    <reaction evidence="1">
        <text>chlorophyllide a + oxidized 2[4Fe-4S]-[ferredoxin] + 2 ADP + 2 phosphate = protochlorophyllide a + reduced 2[4Fe-4S]-[ferredoxin] + 2 ATP + 2 H2O</text>
        <dbReference type="Rhea" id="RHEA:28202"/>
        <dbReference type="Rhea" id="RHEA-COMP:10002"/>
        <dbReference type="Rhea" id="RHEA-COMP:10004"/>
        <dbReference type="ChEBI" id="CHEBI:15377"/>
        <dbReference type="ChEBI" id="CHEBI:30616"/>
        <dbReference type="ChEBI" id="CHEBI:33722"/>
        <dbReference type="ChEBI" id="CHEBI:33723"/>
        <dbReference type="ChEBI" id="CHEBI:43474"/>
        <dbReference type="ChEBI" id="CHEBI:83348"/>
        <dbReference type="ChEBI" id="CHEBI:83350"/>
        <dbReference type="ChEBI" id="CHEBI:456216"/>
        <dbReference type="EC" id="1.3.7.7"/>
    </reaction>
</comment>
<comment type="cofactor">
    <cofactor evidence="1">
        <name>[4Fe-4S] cluster</name>
        <dbReference type="ChEBI" id="CHEBI:49883"/>
    </cofactor>
    <text evidence="1">Binds 1 [4Fe-4S] cluster per dimer.</text>
</comment>
<comment type="pathway">
    <text evidence="1">Porphyrin-containing compound metabolism; chlorophyll biosynthesis (light-independent).</text>
</comment>
<comment type="subunit">
    <text evidence="1">Homodimer. Protochlorophyllide reductase is composed of three subunits; ChlL, ChlN and ChlB.</text>
</comment>
<comment type="similarity">
    <text evidence="1">Belongs to the NifH/BchL/ChlL family.</text>
</comment>
<comment type="sequence caution" evidence="2">
    <conflict type="erroneous initiation">
        <sequence resource="EMBL-CDS" id="ABA21950"/>
    </conflict>
</comment>
<accession>Q3MAN6</accession>
<dbReference type="EC" id="1.3.7.7" evidence="1"/>
<dbReference type="EMBL" id="CP000117">
    <property type="protein sequence ID" value="ABA21950.1"/>
    <property type="status" value="ALT_INIT"/>
    <property type="molecule type" value="Genomic_DNA"/>
</dbReference>
<dbReference type="SMR" id="Q3MAN6"/>
<dbReference type="STRING" id="240292.Ava_2332"/>
<dbReference type="KEGG" id="ava:Ava_2332"/>
<dbReference type="eggNOG" id="COG1348">
    <property type="taxonomic scope" value="Bacteria"/>
</dbReference>
<dbReference type="HOGENOM" id="CLU_059373_2_0_3"/>
<dbReference type="UniPathway" id="UPA00670"/>
<dbReference type="Proteomes" id="UP000002533">
    <property type="component" value="Chromosome"/>
</dbReference>
<dbReference type="GO" id="GO:0051539">
    <property type="term" value="F:4 iron, 4 sulfur cluster binding"/>
    <property type="evidence" value="ECO:0007669"/>
    <property type="project" value="UniProtKB-UniRule"/>
</dbReference>
<dbReference type="GO" id="GO:0005524">
    <property type="term" value="F:ATP binding"/>
    <property type="evidence" value="ECO:0007669"/>
    <property type="project" value="UniProtKB-UniRule"/>
</dbReference>
<dbReference type="GO" id="GO:0046872">
    <property type="term" value="F:metal ion binding"/>
    <property type="evidence" value="ECO:0007669"/>
    <property type="project" value="UniProtKB-KW"/>
</dbReference>
<dbReference type="GO" id="GO:0016730">
    <property type="term" value="F:oxidoreductase activity, acting on iron-sulfur proteins as donors"/>
    <property type="evidence" value="ECO:0007669"/>
    <property type="project" value="InterPro"/>
</dbReference>
<dbReference type="GO" id="GO:0016636">
    <property type="term" value="F:oxidoreductase activity, acting on the CH-CH group of donors, iron-sulfur protein as acceptor"/>
    <property type="evidence" value="ECO:0007669"/>
    <property type="project" value="UniProtKB-UniRule"/>
</dbReference>
<dbReference type="GO" id="GO:0036068">
    <property type="term" value="P:light-independent chlorophyll biosynthetic process"/>
    <property type="evidence" value="ECO:0007669"/>
    <property type="project" value="UniProtKB-UniRule"/>
</dbReference>
<dbReference type="GO" id="GO:0019685">
    <property type="term" value="P:photosynthesis, dark reaction"/>
    <property type="evidence" value="ECO:0007669"/>
    <property type="project" value="InterPro"/>
</dbReference>
<dbReference type="CDD" id="cd02032">
    <property type="entry name" value="Bchl-like"/>
    <property type="match status" value="1"/>
</dbReference>
<dbReference type="Gene3D" id="3.40.50.300">
    <property type="entry name" value="P-loop containing nucleotide triphosphate hydrolases"/>
    <property type="match status" value="1"/>
</dbReference>
<dbReference type="HAMAP" id="MF_00355">
    <property type="entry name" value="ChlL_BchL"/>
    <property type="match status" value="1"/>
</dbReference>
<dbReference type="InterPro" id="IPR030655">
    <property type="entry name" value="NifH/chlL_CS"/>
</dbReference>
<dbReference type="InterPro" id="IPR000392">
    <property type="entry name" value="NifH/frxC"/>
</dbReference>
<dbReference type="InterPro" id="IPR027417">
    <property type="entry name" value="P-loop_NTPase"/>
</dbReference>
<dbReference type="InterPro" id="IPR005971">
    <property type="entry name" value="Protochlorophyllide_ATP-bd"/>
</dbReference>
<dbReference type="NCBIfam" id="TIGR01281">
    <property type="entry name" value="DPOR_bchL"/>
    <property type="match status" value="1"/>
</dbReference>
<dbReference type="PANTHER" id="PTHR42864">
    <property type="entry name" value="LIGHT-INDEPENDENT PROTOCHLOROPHYLLIDE REDUCTASE IRON-SULFUR ATP-BINDING PROTEIN"/>
    <property type="match status" value="1"/>
</dbReference>
<dbReference type="PANTHER" id="PTHR42864:SF2">
    <property type="entry name" value="LIGHT-INDEPENDENT PROTOCHLOROPHYLLIDE REDUCTASE IRON-SULFUR ATP-BINDING PROTEIN"/>
    <property type="match status" value="1"/>
</dbReference>
<dbReference type="Pfam" id="PF00142">
    <property type="entry name" value="Fer4_NifH"/>
    <property type="match status" value="1"/>
</dbReference>
<dbReference type="PIRSF" id="PIRSF000363">
    <property type="entry name" value="Nitrogenase_iron"/>
    <property type="match status" value="1"/>
</dbReference>
<dbReference type="PRINTS" id="PR00091">
    <property type="entry name" value="NITROGNASEII"/>
</dbReference>
<dbReference type="SUPFAM" id="SSF52540">
    <property type="entry name" value="P-loop containing nucleoside triphosphate hydrolases"/>
    <property type="match status" value="1"/>
</dbReference>
<dbReference type="PROSITE" id="PS00746">
    <property type="entry name" value="NIFH_FRXC_1"/>
    <property type="match status" value="1"/>
</dbReference>
<dbReference type="PROSITE" id="PS00692">
    <property type="entry name" value="NIFH_FRXC_2"/>
    <property type="match status" value="1"/>
</dbReference>
<dbReference type="PROSITE" id="PS51026">
    <property type="entry name" value="NIFH_FRXC_3"/>
    <property type="match status" value="1"/>
</dbReference>
<gene>
    <name evidence="1" type="primary">chlL</name>
    <name type="ordered locus">Ava_2332</name>
</gene>
<proteinExistence type="inferred from homology"/>